<organism>
    <name type="scientific">Leptospira interrogans serogroup Icterohaemorrhagiae serovar Lai (strain 56601)</name>
    <dbReference type="NCBI Taxonomy" id="189518"/>
    <lineage>
        <taxon>Bacteria</taxon>
        <taxon>Pseudomonadati</taxon>
        <taxon>Spirochaetota</taxon>
        <taxon>Spirochaetia</taxon>
        <taxon>Leptospirales</taxon>
        <taxon>Leptospiraceae</taxon>
        <taxon>Leptospira</taxon>
    </lineage>
</organism>
<accession>Q8EZ21</accession>
<evidence type="ECO:0000255" key="1">
    <source>
        <dbReference type="HAMAP-Rule" id="MF_00209"/>
    </source>
</evidence>
<dbReference type="EC" id="3.6.1.1" evidence="1"/>
<dbReference type="EMBL" id="AE010300">
    <property type="protein sequence ID" value="AAN51238.1"/>
    <property type="molecule type" value="Genomic_DNA"/>
</dbReference>
<dbReference type="RefSeq" id="NP_714220.1">
    <property type="nucleotide sequence ID" value="NC_004342.2"/>
</dbReference>
<dbReference type="RefSeq" id="WP_000233562.1">
    <property type="nucleotide sequence ID" value="NC_004342.2"/>
</dbReference>
<dbReference type="SMR" id="Q8EZ21"/>
<dbReference type="FunCoup" id="Q8EZ21">
    <property type="interactions" value="317"/>
</dbReference>
<dbReference type="STRING" id="189518.LA_4040"/>
<dbReference type="PaxDb" id="189518-LA_4040"/>
<dbReference type="EnsemblBacteria" id="AAN51238">
    <property type="protein sequence ID" value="AAN51238"/>
    <property type="gene ID" value="LA_4040"/>
</dbReference>
<dbReference type="KEGG" id="lil:LA_4040"/>
<dbReference type="PATRIC" id="fig|189518.3.peg.4006"/>
<dbReference type="HOGENOM" id="CLU_073198_1_2_12"/>
<dbReference type="InParanoid" id="Q8EZ21"/>
<dbReference type="OrthoDB" id="5187599at2"/>
<dbReference type="Proteomes" id="UP000001408">
    <property type="component" value="Chromosome I"/>
</dbReference>
<dbReference type="GO" id="GO:0005737">
    <property type="term" value="C:cytoplasm"/>
    <property type="evidence" value="ECO:0007669"/>
    <property type="project" value="UniProtKB-SubCell"/>
</dbReference>
<dbReference type="GO" id="GO:0004427">
    <property type="term" value="F:inorganic diphosphate phosphatase activity"/>
    <property type="evidence" value="ECO:0000318"/>
    <property type="project" value="GO_Central"/>
</dbReference>
<dbReference type="GO" id="GO:0000287">
    <property type="term" value="F:magnesium ion binding"/>
    <property type="evidence" value="ECO:0007669"/>
    <property type="project" value="UniProtKB-UniRule"/>
</dbReference>
<dbReference type="GO" id="GO:0006796">
    <property type="term" value="P:phosphate-containing compound metabolic process"/>
    <property type="evidence" value="ECO:0000318"/>
    <property type="project" value="GO_Central"/>
</dbReference>
<dbReference type="CDD" id="cd00412">
    <property type="entry name" value="pyrophosphatase"/>
    <property type="match status" value="1"/>
</dbReference>
<dbReference type="FunFam" id="3.90.80.10:FF:000003">
    <property type="entry name" value="Inorganic pyrophosphatase"/>
    <property type="match status" value="1"/>
</dbReference>
<dbReference type="Gene3D" id="3.90.80.10">
    <property type="entry name" value="Inorganic pyrophosphatase"/>
    <property type="match status" value="1"/>
</dbReference>
<dbReference type="HAMAP" id="MF_00209">
    <property type="entry name" value="Inorganic_PPase"/>
    <property type="match status" value="1"/>
</dbReference>
<dbReference type="InterPro" id="IPR008162">
    <property type="entry name" value="Pyrophosphatase"/>
</dbReference>
<dbReference type="InterPro" id="IPR036649">
    <property type="entry name" value="Pyrophosphatase_sf"/>
</dbReference>
<dbReference type="PANTHER" id="PTHR10286">
    <property type="entry name" value="INORGANIC PYROPHOSPHATASE"/>
    <property type="match status" value="1"/>
</dbReference>
<dbReference type="Pfam" id="PF00719">
    <property type="entry name" value="Pyrophosphatase"/>
    <property type="match status" value="1"/>
</dbReference>
<dbReference type="SUPFAM" id="SSF50324">
    <property type="entry name" value="Inorganic pyrophosphatase"/>
    <property type="match status" value="1"/>
</dbReference>
<comment type="function">
    <text evidence="1">Catalyzes the hydrolysis of inorganic pyrophosphate (PPi) forming two phosphate ions.</text>
</comment>
<comment type="catalytic activity">
    <reaction evidence="1">
        <text>diphosphate + H2O = 2 phosphate + H(+)</text>
        <dbReference type="Rhea" id="RHEA:24576"/>
        <dbReference type="ChEBI" id="CHEBI:15377"/>
        <dbReference type="ChEBI" id="CHEBI:15378"/>
        <dbReference type="ChEBI" id="CHEBI:33019"/>
        <dbReference type="ChEBI" id="CHEBI:43474"/>
        <dbReference type="EC" id="3.6.1.1"/>
    </reaction>
</comment>
<comment type="cofactor">
    <cofactor evidence="1">
        <name>Mg(2+)</name>
        <dbReference type="ChEBI" id="CHEBI:18420"/>
    </cofactor>
</comment>
<comment type="subunit">
    <text evidence="1">Homohexamer.</text>
</comment>
<comment type="subcellular location">
    <subcellularLocation>
        <location evidence="1">Cytoplasm</location>
    </subcellularLocation>
</comment>
<comment type="similarity">
    <text evidence="1">Belongs to the PPase family.</text>
</comment>
<keyword id="KW-0963">Cytoplasm</keyword>
<keyword id="KW-0378">Hydrolase</keyword>
<keyword id="KW-0460">Magnesium</keyword>
<keyword id="KW-0479">Metal-binding</keyword>
<keyword id="KW-1185">Reference proteome</keyword>
<proteinExistence type="inferred from homology"/>
<protein>
    <recommendedName>
        <fullName evidence="1">Inorganic pyrophosphatase</fullName>
        <ecNumber evidence="1">3.6.1.1</ecNumber>
    </recommendedName>
    <alternativeName>
        <fullName evidence="1">Pyrophosphate phospho-hydrolase</fullName>
        <shortName evidence="1">PPase</shortName>
    </alternativeName>
</protein>
<reference key="1">
    <citation type="journal article" date="2003" name="Nature">
        <title>Unique physiological and pathogenic features of Leptospira interrogans revealed by whole-genome sequencing.</title>
        <authorList>
            <person name="Ren S.-X."/>
            <person name="Fu G."/>
            <person name="Jiang X.-G."/>
            <person name="Zeng R."/>
            <person name="Miao Y.-G."/>
            <person name="Xu H."/>
            <person name="Zhang Y.-X."/>
            <person name="Xiong H."/>
            <person name="Lu G."/>
            <person name="Lu L.-F."/>
            <person name="Jiang H.-Q."/>
            <person name="Jia J."/>
            <person name="Tu Y.-F."/>
            <person name="Jiang J.-X."/>
            <person name="Gu W.-Y."/>
            <person name="Zhang Y.-Q."/>
            <person name="Cai Z."/>
            <person name="Sheng H.-H."/>
            <person name="Yin H.-F."/>
            <person name="Zhang Y."/>
            <person name="Zhu G.-F."/>
            <person name="Wan M."/>
            <person name="Huang H.-L."/>
            <person name="Qian Z."/>
            <person name="Wang S.-Y."/>
            <person name="Ma W."/>
            <person name="Yao Z.-J."/>
            <person name="Shen Y."/>
            <person name="Qiang B.-Q."/>
            <person name="Xia Q.-C."/>
            <person name="Guo X.-K."/>
            <person name="Danchin A."/>
            <person name="Saint Girons I."/>
            <person name="Somerville R.L."/>
            <person name="Wen Y.-M."/>
            <person name="Shi M.-H."/>
            <person name="Chen Z."/>
            <person name="Xu J.-G."/>
            <person name="Zhao G.-P."/>
        </authorList>
    </citation>
    <scope>NUCLEOTIDE SEQUENCE [LARGE SCALE GENOMIC DNA]</scope>
    <source>
        <strain>56601</strain>
    </source>
</reference>
<feature type="chain" id="PRO_0000137506" description="Inorganic pyrophosphatase">
    <location>
        <begin position="1"/>
        <end position="178"/>
    </location>
</feature>
<feature type="binding site" evidence="1">
    <location>
        <position position="31"/>
    </location>
    <ligand>
        <name>substrate</name>
    </ligand>
</feature>
<feature type="binding site" evidence="1">
    <location>
        <position position="45"/>
    </location>
    <ligand>
        <name>substrate</name>
    </ligand>
</feature>
<feature type="binding site" evidence="1">
    <location>
        <position position="57"/>
    </location>
    <ligand>
        <name>substrate</name>
    </ligand>
</feature>
<feature type="binding site" evidence="1">
    <location>
        <position position="67"/>
    </location>
    <ligand>
        <name>Mg(2+)</name>
        <dbReference type="ChEBI" id="CHEBI:18420"/>
        <label>1</label>
    </ligand>
</feature>
<feature type="binding site" evidence="1">
    <location>
        <position position="72"/>
    </location>
    <ligand>
        <name>Mg(2+)</name>
        <dbReference type="ChEBI" id="CHEBI:18420"/>
        <label>1</label>
    </ligand>
</feature>
<feature type="binding site" evidence="1">
    <location>
        <position position="72"/>
    </location>
    <ligand>
        <name>Mg(2+)</name>
        <dbReference type="ChEBI" id="CHEBI:18420"/>
        <label>2</label>
    </ligand>
</feature>
<feature type="binding site" evidence="1">
    <location>
        <position position="104"/>
    </location>
    <ligand>
        <name>Mg(2+)</name>
        <dbReference type="ChEBI" id="CHEBI:18420"/>
        <label>1</label>
    </ligand>
</feature>
<feature type="binding site" evidence="1">
    <location>
        <position position="141"/>
    </location>
    <ligand>
        <name>substrate</name>
    </ligand>
</feature>
<name>IPYR_LEPIN</name>
<gene>
    <name evidence="1" type="primary">ppa</name>
    <name type="ordered locus">LA_4040</name>
</gene>
<sequence>MVHPWHDISPGDQNPEIVNGVIEIKRGSRAKYEVDKEYGILKLDRVLYSSFYYPANYGFIPQSYCGDQDPLDILVLSQVELEPLCLVKAKVIGVMRMLDSGEEDDKIIAVAANDMSVNHINDISELPPHFTLELKHFFEDYKKLENKTVVIEEFQNAILARKIVLDSLELYKKTFPKK</sequence>